<proteinExistence type="inferred from homology"/>
<reference key="1">
    <citation type="submission" date="2006-03" db="EMBL/GenBank/DDBJ databases">
        <title>Complete genome sequence of Gemmatimonas aurantiaca T-27 that represents a novel phylum Gemmatimonadetes.</title>
        <authorList>
            <person name="Takasaki K."/>
            <person name="Ichikawa N."/>
            <person name="Miura H."/>
            <person name="Matsushita S."/>
            <person name="Watanabe Y."/>
            <person name="Oguchi A."/>
            <person name="Ankai A."/>
            <person name="Yashiro I."/>
            <person name="Takahashi M."/>
            <person name="Terui Y."/>
            <person name="Fukui S."/>
            <person name="Yokoyama H."/>
            <person name="Tanikawa S."/>
            <person name="Hanada S."/>
            <person name="Kamagata Y."/>
            <person name="Fujita N."/>
        </authorList>
    </citation>
    <scope>NUCLEOTIDE SEQUENCE [LARGE SCALE GENOMIC DNA]</scope>
    <source>
        <strain>DSM 14586 / JCM 11422 / NBRC 100505 / T-27</strain>
    </source>
</reference>
<organism>
    <name type="scientific">Gemmatimonas aurantiaca (strain DSM 14586 / JCM 11422 / NBRC 100505 / T-27)</name>
    <dbReference type="NCBI Taxonomy" id="379066"/>
    <lineage>
        <taxon>Bacteria</taxon>
        <taxon>Pseudomonadati</taxon>
        <taxon>Gemmatimonadota</taxon>
        <taxon>Gemmatimonadia</taxon>
        <taxon>Gemmatimonadales</taxon>
        <taxon>Gemmatimonadaceae</taxon>
        <taxon>Gemmatimonas</taxon>
    </lineage>
</organism>
<feature type="chain" id="PRO_1000203792" description="6,7-dimethyl-8-ribityllumazine synthase">
    <location>
        <begin position="1"/>
        <end position="164"/>
    </location>
</feature>
<feature type="active site" description="Proton donor" evidence="1">
    <location>
        <position position="88"/>
    </location>
</feature>
<feature type="binding site" evidence="1">
    <location>
        <position position="22"/>
    </location>
    <ligand>
        <name>5-amino-6-(D-ribitylamino)uracil</name>
        <dbReference type="ChEBI" id="CHEBI:15934"/>
    </ligand>
</feature>
<feature type="binding site" evidence="1">
    <location>
        <begin position="56"/>
        <end position="58"/>
    </location>
    <ligand>
        <name>5-amino-6-(D-ribitylamino)uracil</name>
        <dbReference type="ChEBI" id="CHEBI:15934"/>
    </ligand>
</feature>
<feature type="binding site" evidence="1">
    <location>
        <begin position="80"/>
        <end position="82"/>
    </location>
    <ligand>
        <name>5-amino-6-(D-ribitylamino)uracil</name>
        <dbReference type="ChEBI" id="CHEBI:15934"/>
    </ligand>
</feature>
<feature type="binding site" evidence="1">
    <location>
        <begin position="85"/>
        <end position="86"/>
    </location>
    <ligand>
        <name>(2S)-2-hydroxy-3-oxobutyl phosphate</name>
        <dbReference type="ChEBI" id="CHEBI:58830"/>
    </ligand>
</feature>
<feature type="binding site" evidence="1">
    <location>
        <position position="113"/>
    </location>
    <ligand>
        <name>5-amino-6-(D-ribitylamino)uracil</name>
        <dbReference type="ChEBI" id="CHEBI:15934"/>
    </ligand>
</feature>
<feature type="binding site" evidence="1">
    <location>
        <position position="127"/>
    </location>
    <ligand>
        <name>(2S)-2-hydroxy-3-oxobutyl phosphate</name>
        <dbReference type="ChEBI" id="CHEBI:58830"/>
    </ligand>
</feature>
<dbReference type="EC" id="2.5.1.78" evidence="1"/>
<dbReference type="EMBL" id="AP009153">
    <property type="protein sequence ID" value="BAH38516.1"/>
    <property type="molecule type" value="Genomic_DNA"/>
</dbReference>
<dbReference type="RefSeq" id="WP_012682963.1">
    <property type="nucleotide sequence ID" value="NC_012489.1"/>
</dbReference>
<dbReference type="SMR" id="C1A8F6"/>
<dbReference type="STRING" id="379066.GAU_1474"/>
<dbReference type="KEGG" id="gau:GAU_1474"/>
<dbReference type="eggNOG" id="COG0054">
    <property type="taxonomic scope" value="Bacteria"/>
</dbReference>
<dbReference type="HOGENOM" id="CLU_089358_1_1_0"/>
<dbReference type="OrthoDB" id="9809709at2"/>
<dbReference type="UniPathway" id="UPA00275">
    <property type="reaction ID" value="UER00404"/>
</dbReference>
<dbReference type="Proteomes" id="UP000002209">
    <property type="component" value="Chromosome"/>
</dbReference>
<dbReference type="GO" id="GO:0005829">
    <property type="term" value="C:cytosol"/>
    <property type="evidence" value="ECO:0007669"/>
    <property type="project" value="TreeGrafter"/>
</dbReference>
<dbReference type="GO" id="GO:0009349">
    <property type="term" value="C:riboflavin synthase complex"/>
    <property type="evidence" value="ECO:0007669"/>
    <property type="project" value="InterPro"/>
</dbReference>
<dbReference type="GO" id="GO:0000906">
    <property type="term" value="F:6,7-dimethyl-8-ribityllumazine synthase activity"/>
    <property type="evidence" value="ECO:0007669"/>
    <property type="project" value="UniProtKB-UniRule"/>
</dbReference>
<dbReference type="GO" id="GO:0009231">
    <property type="term" value="P:riboflavin biosynthetic process"/>
    <property type="evidence" value="ECO:0007669"/>
    <property type="project" value="UniProtKB-UniRule"/>
</dbReference>
<dbReference type="CDD" id="cd09209">
    <property type="entry name" value="Lumazine_synthase-I"/>
    <property type="match status" value="1"/>
</dbReference>
<dbReference type="Gene3D" id="3.40.50.960">
    <property type="entry name" value="Lumazine/riboflavin synthase"/>
    <property type="match status" value="1"/>
</dbReference>
<dbReference type="HAMAP" id="MF_00178">
    <property type="entry name" value="Lumazine_synth"/>
    <property type="match status" value="1"/>
</dbReference>
<dbReference type="InterPro" id="IPR034964">
    <property type="entry name" value="LS"/>
</dbReference>
<dbReference type="InterPro" id="IPR002180">
    <property type="entry name" value="LS/RS"/>
</dbReference>
<dbReference type="InterPro" id="IPR036467">
    <property type="entry name" value="LS/RS_sf"/>
</dbReference>
<dbReference type="NCBIfam" id="TIGR00114">
    <property type="entry name" value="lumazine-synth"/>
    <property type="match status" value="1"/>
</dbReference>
<dbReference type="PANTHER" id="PTHR21058:SF0">
    <property type="entry name" value="6,7-DIMETHYL-8-RIBITYLLUMAZINE SYNTHASE"/>
    <property type="match status" value="1"/>
</dbReference>
<dbReference type="PANTHER" id="PTHR21058">
    <property type="entry name" value="6,7-DIMETHYL-8-RIBITYLLUMAZINE SYNTHASE DMRL SYNTHASE LUMAZINE SYNTHASE"/>
    <property type="match status" value="1"/>
</dbReference>
<dbReference type="Pfam" id="PF00885">
    <property type="entry name" value="DMRL_synthase"/>
    <property type="match status" value="1"/>
</dbReference>
<dbReference type="SUPFAM" id="SSF52121">
    <property type="entry name" value="Lumazine synthase"/>
    <property type="match status" value="1"/>
</dbReference>
<keyword id="KW-1185">Reference proteome</keyword>
<keyword id="KW-0686">Riboflavin biosynthesis</keyword>
<keyword id="KW-0808">Transferase</keyword>
<evidence type="ECO:0000255" key="1">
    <source>
        <dbReference type="HAMAP-Rule" id="MF_00178"/>
    </source>
</evidence>
<comment type="function">
    <text evidence="1">Catalyzes the formation of 6,7-dimethyl-8-ribityllumazine by condensation of 5-amino-6-(D-ribitylamino)uracil with 3,4-dihydroxy-2-butanone 4-phosphate. This is the penultimate step in the biosynthesis of riboflavin.</text>
</comment>
<comment type="catalytic activity">
    <reaction evidence="1">
        <text>(2S)-2-hydroxy-3-oxobutyl phosphate + 5-amino-6-(D-ribitylamino)uracil = 6,7-dimethyl-8-(1-D-ribityl)lumazine + phosphate + 2 H2O + H(+)</text>
        <dbReference type="Rhea" id="RHEA:26152"/>
        <dbReference type="ChEBI" id="CHEBI:15377"/>
        <dbReference type="ChEBI" id="CHEBI:15378"/>
        <dbReference type="ChEBI" id="CHEBI:15934"/>
        <dbReference type="ChEBI" id="CHEBI:43474"/>
        <dbReference type="ChEBI" id="CHEBI:58201"/>
        <dbReference type="ChEBI" id="CHEBI:58830"/>
        <dbReference type="EC" id="2.5.1.78"/>
    </reaction>
</comment>
<comment type="pathway">
    <text evidence="1">Cofactor biosynthesis; riboflavin biosynthesis; riboflavin from 2-hydroxy-3-oxobutyl phosphate and 5-amino-6-(D-ribitylamino)uracil: step 1/2.</text>
</comment>
<comment type="similarity">
    <text evidence="1">Belongs to the DMRL synthase family.</text>
</comment>
<accession>C1A8F6</accession>
<gene>
    <name evidence="1" type="primary">ribH</name>
    <name type="ordered locus">GAU_1474</name>
</gene>
<name>RISB_GEMAT</name>
<protein>
    <recommendedName>
        <fullName evidence="1">6,7-dimethyl-8-ribityllumazine synthase</fullName>
        <shortName evidence="1">DMRL synthase</shortName>
        <shortName evidence="1">LS</shortName>
        <shortName evidence="1">Lumazine synthase</shortName>
        <ecNumber evidence="1">2.5.1.78</ecNumber>
    </recommendedName>
</protein>
<sequence length="164" mass="17188">MAEFSGEPRGEGRRIVVVASRFNEGVTVPLAEGAVSALVGKGVAFDNIDVLWVPGAWELPVAVRRALSSERYDAAVAVGAVIRGDTPHFDIVAGETARGLMEASRDFDVPVTLGLLTTDTLEQAEARAGGVHGNKGADAALAALEVLDLFDRALPANDYDEDGE</sequence>